<accession>Q4FQ48</accession>
<protein>
    <recommendedName>
        <fullName evidence="1">UvrABC system protein C</fullName>
        <shortName evidence="1">Protein UvrC</shortName>
    </recommendedName>
    <alternativeName>
        <fullName evidence="1">Excinuclease ABC subunit C</fullName>
    </alternativeName>
</protein>
<dbReference type="EMBL" id="CP000082">
    <property type="protein sequence ID" value="AAZ19860.1"/>
    <property type="molecule type" value="Genomic_DNA"/>
</dbReference>
<dbReference type="RefSeq" id="WP_011281268.1">
    <property type="nucleotide sequence ID" value="NC_007204.1"/>
</dbReference>
<dbReference type="SMR" id="Q4FQ48"/>
<dbReference type="STRING" id="259536.Psyc_2013"/>
<dbReference type="KEGG" id="par:Psyc_2013"/>
<dbReference type="eggNOG" id="COG0322">
    <property type="taxonomic scope" value="Bacteria"/>
</dbReference>
<dbReference type="HOGENOM" id="CLU_014841_3_0_6"/>
<dbReference type="OrthoDB" id="9804933at2"/>
<dbReference type="Proteomes" id="UP000000546">
    <property type="component" value="Chromosome"/>
</dbReference>
<dbReference type="GO" id="GO:0005737">
    <property type="term" value="C:cytoplasm"/>
    <property type="evidence" value="ECO:0007669"/>
    <property type="project" value="UniProtKB-SubCell"/>
</dbReference>
<dbReference type="GO" id="GO:0009380">
    <property type="term" value="C:excinuclease repair complex"/>
    <property type="evidence" value="ECO:0007669"/>
    <property type="project" value="InterPro"/>
</dbReference>
<dbReference type="GO" id="GO:0003677">
    <property type="term" value="F:DNA binding"/>
    <property type="evidence" value="ECO:0007669"/>
    <property type="project" value="UniProtKB-UniRule"/>
</dbReference>
<dbReference type="GO" id="GO:0009381">
    <property type="term" value="F:excinuclease ABC activity"/>
    <property type="evidence" value="ECO:0007669"/>
    <property type="project" value="UniProtKB-UniRule"/>
</dbReference>
<dbReference type="GO" id="GO:0006289">
    <property type="term" value="P:nucleotide-excision repair"/>
    <property type="evidence" value="ECO:0007669"/>
    <property type="project" value="UniProtKB-UniRule"/>
</dbReference>
<dbReference type="GO" id="GO:0009432">
    <property type="term" value="P:SOS response"/>
    <property type="evidence" value="ECO:0007669"/>
    <property type="project" value="UniProtKB-UniRule"/>
</dbReference>
<dbReference type="CDD" id="cd10434">
    <property type="entry name" value="GIY-YIG_UvrC_Cho"/>
    <property type="match status" value="1"/>
</dbReference>
<dbReference type="FunFam" id="3.30.420.340:FF:000001">
    <property type="entry name" value="UvrABC system protein C"/>
    <property type="match status" value="1"/>
</dbReference>
<dbReference type="FunFam" id="3.40.1440.10:FF:000001">
    <property type="entry name" value="UvrABC system protein C"/>
    <property type="match status" value="1"/>
</dbReference>
<dbReference type="Gene3D" id="1.10.150.20">
    <property type="entry name" value="5' to 3' exonuclease, C-terminal subdomain"/>
    <property type="match status" value="1"/>
</dbReference>
<dbReference type="Gene3D" id="3.40.1440.10">
    <property type="entry name" value="GIY-YIG endonuclease"/>
    <property type="match status" value="1"/>
</dbReference>
<dbReference type="Gene3D" id="4.10.860.10">
    <property type="entry name" value="UVR domain"/>
    <property type="match status" value="1"/>
</dbReference>
<dbReference type="Gene3D" id="3.30.420.340">
    <property type="entry name" value="UvrC, RNAse H endonuclease domain"/>
    <property type="match status" value="1"/>
</dbReference>
<dbReference type="HAMAP" id="MF_00203">
    <property type="entry name" value="UvrC"/>
    <property type="match status" value="1"/>
</dbReference>
<dbReference type="InterPro" id="IPR041663">
    <property type="entry name" value="DisA/LigA_HHH"/>
</dbReference>
<dbReference type="InterPro" id="IPR000305">
    <property type="entry name" value="GIY-YIG_endonuc"/>
</dbReference>
<dbReference type="InterPro" id="IPR035901">
    <property type="entry name" value="GIY-YIG_endonuc_sf"/>
</dbReference>
<dbReference type="InterPro" id="IPR047296">
    <property type="entry name" value="GIY-YIG_UvrC_Cho"/>
</dbReference>
<dbReference type="InterPro" id="IPR010994">
    <property type="entry name" value="RuvA_2-like"/>
</dbReference>
<dbReference type="InterPro" id="IPR001943">
    <property type="entry name" value="UVR_dom"/>
</dbReference>
<dbReference type="InterPro" id="IPR036876">
    <property type="entry name" value="UVR_dom_sf"/>
</dbReference>
<dbReference type="InterPro" id="IPR050066">
    <property type="entry name" value="UvrABC_protein_C"/>
</dbReference>
<dbReference type="InterPro" id="IPR004791">
    <property type="entry name" value="UvrC"/>
</dbReference>
<dbReference type="InterPro" id="IPR001162">
    <property type="entry name" value="UvrC_RNase_H_dom"/>
</dbReference>
<dbReference type="InterPro" id="IPR038476">
    <property type="entry name" value="UvrC_RNase_H_dom_sf"/>
</dbReference>
<dbReference type="NCBIfam" id="TIGR00194">
    <property type="entry name" value="uvrC"/>
    <property type="match status" value="1"/>
</dbReference>
<dbReference type="PANTHER" id="PTHR30562:SF1">
    <property type="entry name" value="UVRABC SYSTEM PROTEIN C"/>
    <property type="match status" value="1"/>
</dbReference>
<dbReference type="PANTHER" id="PTHR30562">
    <property type="entry name" value="UVRC/OXIDOREDUCTASE"/>
    <property type="match status" value="1"/>
</dbReference>
<dbReference type="Pfam" id="PF01541">
    <property type="entry name" value="GIY-YIG"/>
    <property type="match status" value="1"/>
</dbReference>
<dbReference type="Pfam" id="PF12826">
    <property type="entry name" value="HHH_2"/>
    <property type="match status" value="1"/>
</dbReference>
<dbReference type="Pfam" id="PF02151">
    <property type="entry name" value="UVR"/>
    <property type="match status" value="1"/>
</dbReference>
<dbReference type="Pfam" id="PF22920">
    <property type="entry name" value="UvrC_RNaseH"/>
    <property type="match status" value="1"/>
</dbReference>
<dbReference type="Pfam" id="PF08459">
    <property type="entry name" value="UvrC_RNaseH_dom"/>
    <property type="match status" value="1"/>
</dbReference>
<dbReference type="SMART" id="SM00465">
    <property type="entry name" value="GIYc"/>
    <property type="match status" value="1"/>
</dbReference>
<dbReference type="SUPFAM" id="SSF46600">
    <property type="entry name" value="C-terminal UvrC-binding domain of UvrB"/>
    <property type="match status" value="1"/>
</dbReference>
<dbReference type="SUPFAM" id="SSF82771">
    <property type="entry name" value="GIY-YIG endonuclease"/>
    <property type="match status" value="1"/>
</dbReference>
<dbReference type="SUPFAM" id="SSF47781">
    <property type="entry name" value="RuvA domain 2-like"/>
    <property type="match status" value="1"/>
</dbReference>
<dbReference type="PROSITE" id="PS50164">
    <property type="entry name" value="GIY_YIG"/>
    <property type="match status" value="1"/>
</dbReference>
<dbReference type="PROSITE" id="PS50151">
    <property type="entry name" value="UVR"/>
    <property type="match status" value="1"/>
</dbReference>
<dbReference type="PROSITE" id="PS50165">
    <property type="entry name" value="UVRC"/>
    <property type="match status" value="1"/>
</dbReference>
<evidence type="ECO:0000255" key="1">
    <source>
        <dbReference type="HAMAP-Rule" id="MF_00203"/>
    </source>
</evidence>
<proteinExistence type="inferred from homology"/>
<organism>
    <name type="scientific">Psychrobacter arcticus (strain DSM 17307 / VKM B-2377 / 273-4)</name>
    <dbReference type="NCBI Taxonomy" id="259536"/>
    <lineage>
        <taxon>Bacteria</taxon>
        <taxon>Pseudomonadati</taxon>
        <taxon>Pseudomonadota</taxon>
        <taxon>Gammaproteobacteria</taxon>
        <taxon>Moraxellales</taxon>
        <taxon>Moraxellaceae</taxon>
        <taxon>Psychrobacter</taxon>
    </lineage>
</organism>
<sequence length="614" mass="68913">MVNVSVLSPVDDKKARLKHLIQRLPNLPGVYKMLGKNGDILYVGKAKSLKSRVNSYFAKTIDHPKTRALVARIHNIETIITRSETEALLLEQNLIKEYRPPYNVLLRDDKSYLYVFISADQPYPRLAYGRGKVNHQKGCFFGPFPSAHAAKETLVLMQKMFQMRQCTNTFFKQRKRPCLEYQIKRCRAPCVGLVSAEEYSEDVNNTIRFLKGDSSDIHSALIEKMEASAEELDFEKAVFYRDQLSMLREVQAKQAVYTVQGEADVIAIASQVGMTCVNVLTVRGGRVLGGKNYFPDVDSSQPLADNLSAFITSFYFQVTDDLPAEIMLSHELPDQVAVSEALASHFGSKVVIKTNVREHRAEWLDLAKLNTNNALKTKLGDYLELHARFGALKDVLADITDRTIDRIECFDISHTMGEATIGGCVVFDQSGSRRRDYRQYAIHDIVGGDDYAAMKQVLTRRYKKQPLPDLLLIDGGKGQLGIAKEVLTELGMLGDTLLIGVAKGEGRKAGLEVLHFIDHEPLDLPMDSKALHLLMHIRDEAHRFAITAHRKKRDKRRSSSVLEVIPGLGEKRRRDLLNHFGGLQQLLGASQQELAGVQGIGPILAKTVYKVLHE</sequence>
<feature type="chain" id="PRO_0000227465" description="UvrABC system protein C">
    <location>
        <begin position="1"/>
        <end position="614"/>
    </location>
</feature>
<feature type="domain" description="GIY-YIG" evidence="1">
    <location>
        <begin position="26"/>
        <end position="104"/>
    </location>
</feature>
<feature type="domain" description="UVR" evidence="1">
    <location>
        <begin position="215"/>
        <end position="250"/>
    </location>
</feature>
<reference key="1">
    <citation type="journal article" date="2010" name="Appl. Environ. Microbiol.">
        <title>The genome sequence of Psychrobacter arcticus 273-4, a psychroactive Siberian permafrost bacterium, reveals mechanisms for adaptation to low-temperature growth.</title>
        <authorList>
            <person name="Ayala-del-Rio H.L."/>
            <person name="Chain P.S."/>
            <person name="Grzymski J.J."/>
            <person name="Ponder M.A."/>
            <person name="Ivanova N."/>
            <person name="Bergholz P.W."/>
            <person name="Di Bartolo G."/>
            <person name="Hauser L."/>
            <person name="Land M."/>
            <person name="Bakermans C."/>
            <person name="Rodrigues D."/>
            <person name="Klappenbach J."/>
            <person name="Zarka D."/>
            <person name="Larimer F."/>
            <person name="Richardson P."/>
            <person name="Murray A."/>
            <person name="Thomashow M."/>
            <person name="Tiedje J.M."/>
        </authorList>
    </citation>
    <scope>NUCLEOTIDE SEQUENCE [LARGE SCALE GENOMIC DNA]</scope>
    <source>
        <strain>DSM 17307 / VKM B-2377 / 273-4</strain>
    </source>
</reference>
<keyword id="KW-0963">Cytoplasm</keyword>
<keyword id="KW-0227">DNA damage</keyword>
<keyword id="KW-0228">DNA excision</keyword>
<keyword id="KW-0234">DNA repair</keyword>
<keyword id="KW-0267">Excision nuclease</keyword>
<keyword id="KW-1185">Reference proteome</keyword>
<keyword id="KW-0742">SOS response</keyword>
<comment type="function">
    <text evidence="1">The UvrABC repair system catalyzes the recognition and processing of DNA lesions. UvrC both incises the 5' and 3' sides of the lesion. The N-terminal half is responsible for the 3' incision and the C-terminal half is responsible for the 5' incision.</text>
</comment>
<comment type="subunit">
    <text evidence="1">Interacts with UvrB in an incision complex.</text>
</comment>
<comment type="subcellular location">
    <subcellularLocation>
        <location evidence="1">Cytoplasm</location>
    </subcellularLocation>
</comment>
<comment type="similarity">
    <text evidence="1">Belongs to the UvrC family.</text>
</comment>
<name>UVRC_PSYA2</name>
<gene>
    <name evidence="1" type="primary">uvrC</name>
    <name type="ordered locus">Psyc_2013</name>
</gene>